<reference evidence="4" key="1">
    <citation type="journal article" date="2018" name="J. Proteome Res.">
        <title>Mating-induced differential peptidomics of neuropeptides and protein hormones in Agrotis ipsilon moths.</title>
        <authorList>
            <person name="Diesner M."/>
            <person name="Gallot A."/>
            <person name="Binz H."/>
            <person name="Gaertner C."/>
            <person name="Vitecek S."/>
            <person name="Kahnt J."/>
            <person name="Schachtner J."/>
            <person name="Jacquin-Joly E."/>
            <person name="Gadenne C."/>
        </authorList>
    </citation>
    <scope>NUCLEOTIDE SEQUENCE [MRNA]</scope>
    <scope>PROTEIN SEQUENCE OF 21-30</scope>
    <scope>TISSUE SPECIFICITY</scope>
    <scope>MASS SPECTROMETRY</scope>
    <scope>IDENTIFICATION BY MASS SPECTROMETRY</scope>
    <scope>AMIDATION AT ASN-30</scope>
    <scope>PYROGLUTAMATE FORMATION AT GLN-21</scope>
</reference>
<dbReference type="GO" id="GO:0005576">
    <property type="term" value="C:extracellular region"/>
    <property type="evidence" value="ECO:0007669"/>
    <property type="project" value="UniProtKB-SubCell"/>
</dbReference>
<dbReference type="GO" id="GO:0005179">
    <property type="term" value="F:hormone activity"/>
    <property type="evidence" value="ECO:0007669"/>
    <property type="project" value="UniProtKB-KW"/>
</dbReference>
<dbReference type="GO" id="GO:0007218">
    <property type="term" value="P:neuropeptide signaling pathway"/>
    <property type="evidence" value="ECO:0007669"/>
    <property type="project" value="UniProtKB-KW"/>
</dbReference>
<dbReference type="InterPro" id="IPR002047">
    <property type="entry name" value="Adipokinetic_hormone_CS"/>
</dbReference>
<dbReference type="InterPro" id="IPR010475">
    <property type="entry name" value="AKH/RPCH_hormone"/>
</dbReference>
<dbReference type="Pfam" id="PF06377">
    <property type="entry name" value="Adipokin_hormo"/>
    <property type="match status" value="1"/>
</dbReference>
<dbReference type="PROSITE" id="PS00256">
    <property type="entry name" value="AKH"/>
    <property type="match status" value="1"/>
</dbReference>
<organism>
    <name type="scientific">Agrotis ipsilon</name>
    <name type="common">Black cutworm moth</name>
    <dbReference type="NCBI Taxonomy" id="56364"/>
    <lineage>
        <taxon>Eukaryota</taxon>
        <taxon>Metazoa</taxon>
        <taxon>Ecdysozoa</taxon>
        <taxon>Arthropoda</taxon>
        <taxon>Hexapoda</taxon>
        <taxon>Insecta</taxon>
        <taxon>Pterygota</taxon>
        <taxon>Neoptera</taxon>
        <taxon>Endopterygota</taxon>
        <taxon>Lepidoptera</taxon>
        <taxon>Glossata</taxon>
        <taxon>Ditrysia</taxon>
        <taxon>Noctuoidea</taxon>
        <taxon>Noctuidae</taxon>
        <taxon>Noctuinae</taxon>
        <taxon>Noctuini</taxon>
        <taxon>Agrotis</taxon>
    </lineage>
</organism>
<name>AKH2_AGRIP</name>
<accession>C0HKR1</accession>
<protein>
    <recommendedName>
        <fullName evidence="5">Adipokinetic prohormone type 2</fullName>
    </recommendedName>
    <component>
        <recommendedName>
            <fullName evidence="3">Adipokinetic hormone 2</fullName>
            <shortName evidence="3">AKH-2</shortName>
        </recommendedName>
    </component>
</protein>
<evidence type="ECO:0000250" key="1">
    <source>
        <dbReference type="UniProtKB" id="P55319"/>
    </source>
</evidence>
<evidence type="ECO:0000269" key="2">
    <source>
    </source>
</evidence>
<evidence type="ECO:0000303" key="3">
    <source>
    </source>
</evidence>
<evidence type="ECO:0000305" key="4"/>
<evidence type="ECO:0000305" key="5">
    <source>
    </source>
</evidence>
<sequence>MCRIFIVLLVVAALAIIIEGQLTFSSGWGNGKRSISSEQINDDCNPEEAIFQIYKLIVSEGERIRACQRDGKM</sequence>
<keyword id="KW-0027">Amidation</keyword>
<keyword id="KW-0165">Cleavage on pair of basic residues</keyword>
<keyword id="KW-0903">Direct protein sequencing</keyword>
<keyword id="KW-0372">Hormone</keyword>
<keyword id="KW-0527">Neuropeptide</keyword>
<keyword id="KW-0873">Pyrrolidone carboxylic acid</keyword>
<keyword id="KW-0964">Secreted</keyword>
<keyword id="KW-0732">Signal</keyword>
<feature type="signal peptide" evidence="2">
    <location>
        <begin position="1"/>
        <end position="20"/>
    </location>
</feature>
<feature type="peptide" id="PRO_0000444513" description="Adipokinetic hormone 2" evidence="2">
    <location>
        <begin position="21"/>
        <end position="30"/>
    </location>
</feature>
<feature type="propeptide" id="PRO_0000444514" evidence="5">
    <location>
        <begin position="34"/>
        <end position="73"/>
    </location>
</feature>
<feature type="modified residue" description="Pyrrolidone carboxylic acid" evidence="2">
    <location>
        <position position="21"/>
    </location>
</feature>
<feature type="modified residue" description="Asparagine amide" evidence="2">
    <location>
        <position position="30"/>
    </location>
</feature>
<comment type="function">
    <text evidence="1">This hormone, released from cells in the corpora cardiaca, causes release of diglycerides from the fat body and stimulation of muscles to use these diglycerides as an energy source during energy-demanding processes.</text>
</comment>
<comment type="subcellular location">
    <subcellularLocation>
        <location evidence="4">Secreted</location>
    </subcellularLocation>
</comment>
<comment type="tissue specificity">
    <text evidence="2">Expressed in corpora cardiaca (CC), corpora allata (CA) and gnathal ganglion (GNG) (at protein level). Expression in CC and CA detected in all animals, expression in GNG detected in few animals (at protein level). Not expressed in antennal lobe (AL) (at protein level).</text>
</comment>
<comment type="mass spectrometry"/>
<comment type="similarity">
    <text evidence="4">Belongs to the AKH/HRTH/RPCH family.</text>
</comment>
<comment type="caution">
    <text evidence="4">Further mature peptides might exist.</text>
</comment>
<proteinExistence type="evidence at protein level"/>